<gene>
    <name type="primary">Isl2</name>
</gene>
<name>ISL2_MOUSE</name>
<sequence length="359" mass="39728">MVDIIFHYPFLGAMGDHSKKKPGTAMCVGCGSQIHDQFILRVSPDLEWHAACLKCAECSQYLDETCTCFVRDGKTYCKRDYVRLFGIKCAQCQVGFSSSDLVMRARDSVYHIECFRCSVCSRQLLPGDEFSLREHELLCRADHGLLLERAAAGSPRSPGPLPGARGLHLPDAGSGRQPSLRTHVHKQAEKTTRVRTVLNEKQLHTLRTCYAANPRPDALMKEQLVEMTGLSPRVIRVWFQNKRCKDKKKSILMKQLQQQQHSDKASLQGLTGTPLVAGSPIRHENAVQGSAVEVQTYQPPWKALSEFALQSDLDQPAFQQLVSFSESGSLGNSSGSDVTSLSSQLPDTPNSMVPSPVET</sequence>
<reference key="1">
    <citation type="journal article" date="2005" name="Science">
        <title>The transcriptional landscape of the mammalian genome.</title>
        <authorList>
            <person name="Carninci P."/>
            <person name="Kasukawa T."/>
            <person name="Katayama S."/>
            <person name="Gough J."/>
            <person name="Frith M.C."/>
            <person name="Maeda N."/>
            <person name="Oyama R."/>
            <person name="Ravasi T."/>
            <person name="Lenhard B."/>
            <person name="Wells C."/>
            <person name="Kodzius R."/>
            <person name="Shimokawa K."/>
            <person name="Bajic V.B."/>
            <person name="Brenner S.E."/>
            <person name="Batalov S."/>
            <person name="Forrest A.R."/>
            <person name="Zavolan M."/>
            <person name="Davis M.J."/>
            <person name="Wilming L.G."/>
            <person name="Aidinis V."/>
            <person name="Allen J.E."/>
            <person name="Ambesi-Impiombato A."/>
            <person name="Apweiler R."/>
            <person name="Aturaliya R.N."/>
            <person name="Bailey T.L."/>
            <person name="Bansal M."/>
            <person name="Baxter L."/>
            <person name="Beisel K.W."/>
            <person name="Bersano T."/>
            <person name="Bono H."/>
            <person name="Chalk A.M."/>
            <person name="Chiu K.P."/>
            <person name="Choudhary V."/>
            <person name="Christoffels A."/>
            <person name="Clutterbuck D.R."/>
            <person name="Crowe M.L."/>
            <person name="Dalla E."/>
            <person name="Dalrymple B.P."/>
            <person name="de Bono B."/>
            <person name="Della Gatta G."/>
            <person name="di Bernardo D."/>
            <person name="Down T."/>
            <person name="Engstrom P."/>
            <person name="Fagiolini M."/>
            <person name="Faulkner G."/>
            <person name="Fletcher C.F."/>
            <person name="Fukushima T."/>
            <person name="Furuno M."/>
            <person name="Futaki S."/>
            <person name="Gariboldi M."/>
            <person name="Georgii-Hemming P."/>
            <person name="Gingeras T.R."/>
            <person name="Gojobori T."/>
            <person name="Green R.E."/>
            <person name="Gustincich S."/>
            <person name="Harbers M."/>
            <person name="Hayashi Y."/>
            <person name="Hensch T.K."/>
            <person name="Hirokawa N."/>
            <person name="Hill D."/>
            <person name="Huminiecki L."/>
            <person name="Iacono M."/>
            <person name="Ikeo K."/>
            <person name="Iwama A."/>
            <person name="Ishikawa T."/>
            <person name="Jakt M."/>
            <person name="Kanapin A."/>
            <person name="Katoh M."/>
            <person name="Kawasawa Y."/>
            <person name="Kelso J."/>
            <person name="Kitamura H."/>
            <person name="Kitano H."/>
            <person name="Kollias G."/>
            <person name="Krishnan S.P."/>
            <person name="Kruger A."/>
            <person name="Kummerfeld S.K."/>
            <person name="Kurochkin I.V."/>
            <person name="Lareau L.F."/>
            <person name="Lazarevic D."/>
            <person name="Lipovich L."/>
            <person name="Liu J."/>
            <person name="Liuni S."/>
            <person name="McWilliam S."/>
            <person name="Madan Babu M."/>
            <person name="Madera M."/>
            <person name="Marchionni L."/>
            <person name="Matsuda H."/>
            <person name="Matsuzawa S."/>
            <person name="Miki H."/>
            <person name="Mignone F."/>
            <person name="Miyake S."/>
            <person name="Morris K."/>
            <person name="Mottagui-Tabar S."/>
            <person name="Mulder N."/>
            <person name="Nakano N."/>
            <person name="Nakauchi H."/>
            <person name="Ng P."/>
            <person name="Nilsson R."/>
            <person name="Nishiguchi S."/>
            <person name="Nishikawa S."/>
            <person name="Nori F."/>
            <person name="Ohara O."/>
            <person name="Okazaki Y."/>
            <person name="Orlando V."/>
            <person name="Pang K.C."/>
            <person name="Pavan W.J."/>
            <person name="Pavesi G."/>
            <person name="Pesole G."/>
            <person name="Petrovsky N."/>
            <person name="Piazza S."/>
            <person name="Reed J."/>
            <person name="Reid J.F."/>
            <person name="Ring B.Z."/>
            <person name="Ringwald M."/>
            <person name="Rost B."/>
            <person name="Ruan Y."/>
            <person name="Salzberg S.L."/>
            <person name="Sandelin A."/>
            <person name="Schneider C."/>
            <person name="Schoenbach C."/>
            <person name="Sekiguchi K."/>
            <person name="Semple C.A."/>
            <person name="Seno S."/>
            <person name="Sessa L."/>
            <person name="Sheng Y."/>
            <person name="Shibata Y."/>
            <person name="Shimada H."/>
            <person name="Shimada K."/>
            <person name="Silva D."/>
            <person name="Sinclair B."/>
            <person name="Sperling S."/>
            <person name="Stupka E."/>
            <person name="Sugiura K."/>
            <person name="Sultana R."/>
            <person name="Takenaka Y."/>
            <person name="Taki K."/>
            <person name="Tammoja K."/>
            <person name="Tan S.L."/>
            <person name="Tang S."/>
            <person name="Taylor M.S."/>
            <person name="Tegner J."/>
            <person name="Teichmann S.A."/>
            <person name="Ueda H.R."/>
            <person name="van Nimwegen E."/>
            <person name="Verardo R."/>
            <person name="Wei C.L."/>
            <person name="Yagi K."/>
            <person name="Yamanishi H."/>
            <person name="Zabarovsky E."/>
            <person name="Zhu S."/>
            <person name="Zimmer A."/>
            <person name="Hide W."/>
            <person name="Bult C."/>
            <person name="Grimmond S.M."/>
            <person name="Teasdale R.D."/>
            <person name="Liu E.T."/>
            <person name="Brusic V."/>
            <person name="Quackenbush J."/>
            <person name="Wahlestedt C."/>
            <person name="Mattick J.S."/>
            <person name="Hume D.A."/>
            <person name="Kai C."/>
            <person name="Sasaki D."/>
            <person name="Tomaru Y."/>
            <person name="Fukuda S."/>
            <person name="Kanamori-Katayama M."/>
            <person name="Suzuki M."/>
            <person name="Aoki J."/>
            <person name="Arakawa T."/>
            <person name="Iida J."/>
            <person name="Imamura K."/>
            <person name="Itoh M."/>
            <person name="Kato T."/>
            <person name="Kawaji H."/>
            <person name="Kawagashira N."/>
            <person name="Kawashima T."/>
            <person name="Kojima M."/>
            <person name="Kondo S."/>
            <person name="Konno H."/>
            <person name="Nakano K."/>
            <person name="Ninomiya N."/>
            <person name="Nishio T."/>
            <person name="Okada M."/>
            <person name="Plessy C."/>
            <person name="Shibata K."/>
            <person name="Shiraki T."/>
            <person name="Suzuki S."/>
            <person name="Tagami M."/>
            <person name="Waki K."/>
            <person name="Watahiki A."/>
            <person name="Okamura-Oho Y."/>
            <person name="Suzuki H."/>
            <person name="Kawai J."/>
            <person name="Hayashizaki Y."/>
        </authorList>
    </citation>
    <scope>NUCLEOTIDE SEQUENCE [LARGE SCALE MRNA]</scope>
    <source>
        <strain>C57BL/6J</strain>
        <tissue>Embryonic head</tissue>
    </source>
</reference>
<reference key="2">
    <citation type="journal article" date="2009" name="PLoS Biol.">
        <title>Lineage-specific biology revealed by a finished genome assembly of the mouse.</title>
        <authorList>
            <person name="Church D.M."/>
            <person name="Goodstadt L."/>
            <person name="Hillier L.W."/>
            <person name="Zody M.C."/>
            <person name="Goldstein S."/>
            <person name="She X."/>
            <person name="Bult C.J."/>
            <person name="Agarwala R."/>
            <person name="Cherry J.L."/>
            <person name="DiCuccio M."/>
            <person name="Hlavina W."/>
            <person name="Kapustin Y."/>
            <person name="Meric P."/>
            <person name="Maglott D."/>
            <person name="Birtle Z."/>
            <person name="Marques A.C."/>
            <person name="Graves T."/>
            <person name="Zhou S."/>
            <person name="Teague B."/>
            <person name="Potamousis K."/>
            <person name="Churas C."/>
            <person name="Place M."/>
            <person name="Herschleb J."/>
            <person name="Runnheim R."/>
            <person name="Forrest D."/>
            <person name="Amos-Landgraf J."/>
            <person name="Schwartz D.C."/>
            <person name="Cheng Z."/>
            <person name="Lindblad-Toh K."/>
            <person name="Eichler E.E."/>
            <person name="Ponting C.P."/>
        </authorList>
    </citation>
    <scope>NUCLEOTIDE SEQUENCE [LARGE SCALE GENOMIC DNA]</scope>
    <source>
        <strain>C57BL/6J</strain>
    </source>
</reference>
<reference key="3">
    <citation type="submission" date="2005-07" db="EMBL/GenBank/DDBJ databases">
        <authorList>
            <person name="Mural R.J."/>
            <person name="Adams M.D."/>
            <person name="Myers E.W."/>
            <person name="Smith H.O."/>
            <person name="Venter J.C."/>
        </authorList>
    </citation>
    <scope>NUCLEOTIDE SEQUENCE [LARGE SCALE GENOMIC DNA]</scope>
</reference>
<reference key="4">
    <citation type="journal article" date="2011" name="J. Biol. Chem.">
        <title>Structural basis for partial redundancy in a class of transcription factors, the LIM homeodomain proteins, in neural cell type specification.</title>
        <authorList>
            <person name="Gadd M.S."/>
            <person name="Bhati M."/>
            <person name="Jeffries C.M."/>
            <person name="Langley D.B."/>
            <person name="Trewhella J."/>
            <person name="Guss J.M."/>
            <person name="Matthews J.M."/>
        </authorList>
    </citation>
    <scope>X-RAY CRYSTALLOGRAPHY (2.16 ANGSTROMS) OF 272-301 IN COMPLEX WITH LHX4</scope>
</reference>
<organism>
    <name type="scientific">Mus musculus</name>
    <name type="common">Mouse</name>
    <dbReference type="NCBI Taxonomy" id="10090"/>
    <lineage>
        <taxon>Eukaryota</taxon>
        <taxon>Metazoa</taxon>
        <taxon>Chordata</taxon>
        <taxon>Craniata</taxon>
        <taxon>Vertebrata</taxon>
        <taxon>Euteleostomi</taxon>
        <taxon>Mammalia</taxon>
        <taxon>Eutheria</taxon>
        <taxon>Euarchontoglires</taxon>
        <taxon>Glires</taxon>
        <taxon>Rodentia</taxon>
        <taxon>Myomorpha</taxon>
        <taxon>Muroidea</taxon>
        <taxon>Muridae</taxon>
        <taxon>Murinae</taxon>
        <taxon>Mus</taxon>
        <taxon>Mus</taxon>
    </lineage>
</organism>
<evidence type="ECO:0000250" key="1"/>
<evidence type="ECO:0000250" key="2">
    <source>
        <dbReference type="UniProtKB" id="Q96A47"/>
    </source>
</evidence>
<evidence type="ECO:0000255" key="3">
    <source>
        <dbReference type="PROSITE-ProRule" id="PRU00108"/>
    </source>
</evidence>
<evidence type="ECO:0000255" key="4">
    <source>
        <dbReference type="PROSITE-ProRule" id="PRU00125"/>
    </source>
</evidence>
<evidence type="ECO:0000256" key="5">
    <source>
        <dbReference type="SAM" id="MobiDB-lite"/>
    </source>
</evidence>
<evidence type="ECO:0000269" key="6">
    <source>
    </source>
</evidence>
<evidence type="ECO:0000305" key="7"/>
<evidence type="ECO:0007829" key="8">
    <source>
        <dbReference type="PDB" id="3MMK"/>
    </source>
</evidence>
<evidence type="ECO:0007829" key="9">
    <source>
        <dbReference type="PDB" id="6CME"/>
    </source>
</evidence>
<accession>Q9CXV0</accession>
<accession>G5E888</accession>
<protein>
    <recommendedName>
        <fullName>Insulin gene enhancer protein ISL-2</fullName>
        <shortName>Islet-2</shortName>
    </recommendedName>
</protein>
<proteinExistence type="evidence at protein level"/>
<feature type="chain" id="PRO_0000075753" description="Insulin gene enhancer protein ISL-2">
    <location>
        <begin position="1"/>
        <end position="359"/>
    </location>
</feature>
<feature type="domain" description="LIM zinc-binding 1" evidence="4">
    <location>
        <begin position="25"/>
        <end position="86"/>
    </location>
</feature>
<feature type="domain" description="LIM zinc-binding 2" evidence="4">
    <location>
        <begin position="87"/>
        <end position="149"/>
    </location>
</feature>
<feature type="DNA-binding region" description="Homeobox" evidence="3">
    <location>
        <begin position="191"/>
        <end position="250"/>
    </location>
</feature>
<feature type="region of interest" description="Disordered" evidence="5">
    <location>
        <begin position="151"/>
        <end position="190"/>
    </location>
</feature>
<feature type="region of interest" description="LIM-binding domain (LID)">
    <location>
        <begin position="272"/>
        <end position="301"/>
    </location>
</feature>
<feature type="region of interest" description="Disordered" evidence="5">
    <location>
        <begin position="326"/>
        <end position="359"/>
    </location>
</feature>
<feature type="compositionally biased region" description="Low complexity" evidence="5">
    <location>
        <begin position="326"/>
        <end position="336"/>
    </location>
</feature>
<feature type="compositionally biased region" description="Polar residues" evidence="5">
    <location>
        <begin position="337"/>
        <end position="359"/>
    </location>
</feature>
<feature type="modified residue" description="Phosphoserine" evidence="2">
    <location>
        <position position="154"/>
    </location>
</feature>
<feature type="modified residue" description="Phosphoserine" evidence="2">
    <location>
        <position position="157"/>
    </location>
</feature>
<feature type="modified residue" description="Phosphoserine" evidence="2">
    <location>
        <position position="279"/>
    </location>
</feature>
<feature type="sequence conflict" description="In Ref. 1; BAB29088." evidence="7" ref="1">
    <original>S</original>
    <variation>T</variation>
    <location>
        <position position="157"/>
    </location>
</feature>
<feature type="sequence conflict" description="In Ref. 1; BAB29088." evidence="7" ref="1">
    <original>H</original>
    <variation>D</variation>
    <location>
        <position position="185"/>
    </location>
</feature>
<feature type="sequence conflict" description="In Ref. 1; BAB29088." evidence="7" ref="1">
    <original>L</original>
    <variation>F</variation>
    <location>
        <position position="267"/>
    </location>
</feature>
<feature type="sequence conflict" description="In Ref. 1; BAB29088." evidence="7" ref="1">
    <original>R</original>
    <variation>G</variation>
    <location>
        <position position="282"/>
    </location>
</feature>
<feature type="strand" evidence="9">
    <location>
        <begin position="154"/>
        <end position="157"/>
    </location>
</feature>
<feature type="strand" evidence="8">
    <location>
        <begin position="160"/>
        <end position="164"/>
    </location>
</feature>
<comment type="function">
    <text evidence="1">Transcriptional factor that defines subclasses of motoneurons that segregate into columns in the spinal cord and select distinct axon pathways.</text>
</comment>
<comment type="subunit">
    <text evidence="6">Interacts with LHX4.</text>
</comment>
<comment type="subcellular location">
    <subcellularLocation>
        <location evidence="3">Nucleus</location>
    </subcellularLocation>
</comment>
<dbReference type="EMBL" id="AK013964">
    <property type="protein sequence ID" value="BAB29088.1"/>
    <property type="molecule type" value="mRNA"/>
</dbReference>
<dbReference type="EMBL" id="AC116699">
    <property type="status" value="NOT_ANNOTATED_CDS"/>
    <property type="molecule type" value="Genomic_DNA"/>
</dbReference>
<dbReference type="EMBL" id="CH466522">
    <property type="protein sequence ID" value="EDL25854.1"/>
    <property type="molecule type" value="Genomic_DNA"/>
</dbReference>
<dbReference type="CCDS" id="CCDS23205.1"/>
<dbReference type="RefSeq" id="NP_081673.2">
    <property type="nucleotide sequence ID" value="NM_027397.3"/>
</dbReference>
<dbReference type="PDB" id="3MMK">
    <property type="method" value="X-ray"/>
    <property type="resolution" value="2.16 A"/>
    <property type="chains" value="A/B=272-301"/>
</dbReference>
<dbReference type="PDB" id="6CME">
    <property type="method" value="X-ray"/>
    <property type="resolution" value="1.92 A"/>
    <property type="chains" value="A/B=153-159"/>
</dbReference>
<dbReference type="PDBsum" id="3MMK"/>
<dbReference type="PDBsum" id="6CME"/>
<dbReference type="SASBDB" id="Q9CXV0"/>
<dbReference type="SMR" id="Q9CXV0"/>
<dbReference type="BioGRID" id="222577">
    <property type="interactions" value="8"/>
</dbReference>
<dbReference type="FunCoup" id="Q9CXV0">
    <property type="interactions" value="676"/>
</dbReference>
<dbReference type="IntAct" id="Q9CXV0">
    <property type="interactions" value="8"/>
</dbReference>
<dbReference type="STRING" id="10090.ENSMUSP00000034869"/>
<dbReference type="iPTMnet" id="Q9CXV0"/>
<dbReference type="PhosphoSitePlus" id="Q9CXV0"/>
<dbReference type="PaxDb" id="10090-ENSMUSP00000034869"/>
<dbReference type="ProteomicsDB" id="269102"/>
<dbReference type="Antibodypedia" id="27431">
    <property type="antibodies" value="230 antibodies from 29 providers"/>
</dbReference>
<dbReference type="DNASU" id="104360"/>
<dbReference type="Ensembl" id="ENSMUST00000034869.11">
    <property type="protein sequence ID" value="ENSMUSP00000034869.5"/>
    <property type="gene ID" value="ENSMUSG00000032318.13"/>
</dbReference>
<dbReference type="GeneID" id="104360"/>
<dbReference type="KEGG" id="mmu:104360"/>
<dbReference type="UCSC" id="uc009psm.1">
    <property type="organism name" value="mouse"/>
</dbReference>
<dbReference type="AGR" id="MGI:109156"/>
<dbReference type="CTD" id="64843"/>
<dbReference type="MGI" id="MGI:109156">
    <property type="gene designation" value="Isl2"/>
</dbReference>
<dbReference type="VEuPathDB" id="HostDB:ENSMUSG00000032318"/>
<dbReference type="eggNOG" id="KOG0490">
    <property type="taxonomic scope" value="Eukaryota"/>
</dbReference>
<dbReference type="GeneTree" id="ENSGT00940000153731"/>
<dbReference type="HOGENOM" id="CLU_027802_2_0_1"/>
<dbReference type="InParanoid" id="Q9CXV0"/>
<dbReference type="OMA" id="AMHPNEV"/>
<dbReference type="OrthoDB" id="125004at2759"/>
<dbReference type="PhylomeDB" id="Q9CXV0"/>
<dbReference type="TreeFam" id="TF315442"/>
<dbReference type="BioGRID-ORCS" id="104360">
    <property type="hits" value="1 hit in 79 CRISPR screens"/>
</dbReference>
<dbReference type="EvolutionaryTrace" id="Q9CXV0"/>
<dbReference type="PRO" id="PR:Q9CXV0"/>
<dbReference type="Proteomes" id="UP000000589">
    <property type="component" value="Chromosome 9"/>
</dbReference>
<dbReference type="RNAct" id="Q9CXV0">
    <property type="molecule type" value="protein"/>
</dbReference>
<dbReference type="Bgee" id="ENSMUSG00000032318">
    <property type="expression patterns" value="Expressed in lumbar dorsal root ganglion and 84 other cell types or tissues"/>
</dbReference>
<dbReference type="ExpressionAtlas" id="Q9CXV0">
    <property type="expression patterns" value="baseline and differential"/>
</dbReference>
<dbReference type="GO" id="GO:0005634">
    <property type="term" value="C:nucleus"/>
    <property type="evidence" value="ECO:0000314"/>
    <property type="project" value="MGI"/>
</dbReference>
<dbReference type="GO" id="GO:0000981">
    <property type="term" value="F:DNA-binding transcription factor activity, RNA polymerase II-specific"/>
    <property type="evidence" value="ECO:0007669"/>
    <property type="project" value="InterPro"/>
</dbReference>
<dbReference type="GO" id="GO:0046872">
    <property type="term" value="F:metal ion binding"/>
    <property type="evidence" value="ECO:0007669"/>
    <property type="project" value="UniProtKB-KW"/>
</dbReference>
<dbReference type="GO" id="GO:1990837">
    <property type="term" value="F:sequence-specific double-stranded DNA binding"/>
    <property type="evidence" value="ECO:0007669"/>
    <property type="project" value="Ensembl"/>
</dbReference>
<dbReference type="GO" id="GO:0045665">
    <property type="term" value="P:negative regulation of neuron differentiation"/>
    <property type="evidence" value="ECO:0000315"/>
    <property type="project" value="MGI"/>
</dbReference>
<dbReference type="GO" id="GO:0030182">
    <property type="term" value="P:neuron differentiation"/>
    <property type="evidence" value="ECO:0000315"/>
    <property type="project" value="MGI"/>
</dbReference>
<dbReference type="GO" id="GO:0048663">
    <property type="term" value="P:neuron fate commitment"/>
    <property type="evidence" value="ECO:0000315"/>
    <property type="project" value="MGI"/>
</dbReference>
<dbReference type="GO" id="GO:0045944">
    <property type="term" value="P:positive regulation of transcription by RNA polymerase II"/>
    <property type="evidence" value="ECO:0007669"/>
    <property type="project" value="InterPro"/>
</dbReference>
<dbReference type="GO" id="GO:0031290">
    <property type="term" value="P:retinal ganglion cell axon guidance"/>
    <property type="evidence" value="ECO:0000315"/>
    <property type="project" value="MGI"/>
</dbReference>
<dbReference type="GO" id="GO:0021520">
    <property type="term" value="P:spinal cord motor neuron cell fate specification"/>
    <property type="evidence" value="ECO:0000316"/>
    <property type="project" value="MGI"/>
</dbReference>
<dbReference type="GO" id="GO:0021524">
    <property type="term" value="P:visceral motor neuron differentiation"/>
    <property type="evidence" value="ECO:0000315"/>
    <property type="project" value="MGI"/>
</dbReference>
<dbReference type="CDD" id="cd00086">
    <property type="entry name" value="homeodomain"/>
    <property type="match status" value="1"/>
</dbReference>
<dbReference type="CDD" id="cd09366">
    <property type="entry name" value="LIM1_Isl"/>
    <property type="match status" value="1"/>
</dbReference>
<dbReference type="CDD" id="cd09471">
    <property type="entry name" value="LIM2_Isl2"/>
    <property type="match status" value="1"/>
</dbReference>
<dbReference type="FunFam" id="2.10.110.10:FF:000034">
    <property type="entry name" value="Insulin gene enhancer protein ISL"/>
    <property type="match status" value="1"/>
</dbReference>
<dbReference type="FunFam" id="1.10.10.60:FF:000041">
    <property type="entry name" value="insulin gene enhancer protein ISL-1"/>
    <property type="match status" value="1"/>
</dbReference>
<dbReference type="FunFam" id="2.10.110.10:FF:000068">
    <property type="entry name" value="Insulin gene enhancer protein ISL-2"/>
    <property type="match status" value="1"/>
</dbReference>
<dbReference type="Gene3D" id="2.10.110.10">
    <property type="entry name" value="Cysteine Rich Protein"/>
    <property type="match status" value="2"/>
</dbReference>
<dbReference type="Gene3D" id="1.10.10.60">
    <property type="entry name" value="Homeodomain-like"/>
    <property type="match status" value="1"/>
</dbReference>
<dbReference type="InterPro" id="IPR001356">
    <property type="entry name" value="HD"/>
</dbReference>
<dbReference type="InterPro" id="IPR017970">
    <property type="entry name" value="Homeobox_CS"/>
</dbReference>
<dbReference type="InterPro" id="IPR009057">
    <property type="entry name" value="Homeodomain-like_sf"/>
</dbReference>
<dbReference type="InterPro" id="IPR047169">
    <property type="entry name" value="ISL1/2-like"/>
</dbReference>
<dbReference type="InterPro" id="IPR047244">
    <property type="entry name" value="ISL1/2-like_LIM1"/>
</dbReference>
<dbReference type="InterPro" id="IPR001781">
    <property type="entry name" value="Znf_LIM"/>
</dbReference>
<dbReference type="PANTHER" id="PTHR24204">
    <property type="entry name" value="INSULIN GENE ENHANCER PROTEIN"/>
    <property type="match status" value="1"/>
</dbReference>
<dbReference type="PANTHER" id="PTHR24204:SF2">
    <property type="entry name" value="INSULIN GENE ENHANCER PROTEIN ISL-2"/>
    <property type="match status" value="1"/>
</dbReference>
<dbReference type="Pfam" id="PF00046">
    <property type="entry name" value="Homeodomain"/>
    <property type="match status" value="1"/>
</dbReference>
<dbReference type="Pfam" id="PF00412">
    <property type="entry name" value="LIM"/>
    <property type="match status" value="2"/>
</dbReference>
<dbReference type="SMART" id="SM00389">
    <property type="entry name" value="HOX"/>
    <property type="match status" value="1"/>
</dbReference>
<dbReference type="SMART" id="SM00132">
    <property type="entry name" value="LIM"/>
    <property type="match status" value="2"/>
</dbReference>
<dbReference type="SUPFAM" id="SSF57716">
    <property type="entry name" value="Glucocorticoid receptor-like (DNA-binding domain)"/>
    <property type="match status" value="2"/>
</dbReference>
<dbReference type="SUPFAM" id="SSF46689">
    <property type="entry name" value="Homeodomain-like"/>
    <property type="match status" value="1"/>
</dbReference>
<dbReference type="PROSITE" id="PS00027">
    <property type="entry name" value="HOMEOBOX_1"/>
    <property type="match status" value="1"/>
</dbReference>
<dbReference type="PROSITE" id="PS50071">
    <property type="entry name" value="HOMEOBOX_2"/>
    <property type="match status" value="1"/>
</dbReference>
<dbReference type="PROSITE" id="PS00478">
    <property type="entry name" value="LIM_DOMAIN_1"/>
    <property type="match status" value="2"/>
</dbReference>
<dbReference type="PROSITE" id="PS50023">
    <property type="entry name" value="LIM_DOMAIN_2"/>
    <property type="match status" value="2"/>
</dbReference>
<keyword id="KW-0002">3D-structure</keyword>
<keyword id="KW-0217">Developmental protein</keyword>
<keyword id="KW-0238">DNA-binding</keyword>
<keyword id="KW-0371">Homeobox</keyword>
<keyword id="KW-0440">LIM domain</keyword>
<keyword id="KW-0479">Metal-binding</keyword>
<keyword id="KW-0539">Nucleus</keyword>
<keyword id="KW-0597">Phosphoprotein</keyword>
<keyword id="KW-1185">Reference proteome</keyword>
<keyword id="KW-0677">Repeat</keyword>
<keyword id="KW-0862">Zinc</keyword>